<organism>
    <name type="scientific">Xylella fastidiosa (strain 9a5c)</name>
    <dbReference type="NCBI Taxonomy" id="160492"/>
    <lineage>
        <taxon>Bacteria</taxon>
        <taxon>Pseudomonadati</taxon>
        <taxon>Pseudomonadota</taxon>
        <taxon>Gammaproteobacteria</taxon>
        <taxon>Lysobacterales</taxon>
        <taxon>Lysobacteraceae</taxon>
        <taxon>Xylella</taxon>
    </lineage>
</organism>
<accession>Q9PE71</accession>
<reference key="1">
    <citation type="journal article" date="2000" name="Nature">
        <title>The genome sequence of the plant pathogen Xylella fastidiosa.</title>
        <authorList>
            <person name="Simpson A.J.G."/>
            <person name="Reinach F.C."/>
            <person name="Arruda P."/>
            <person name="Abreu F.A."/>
            <person name="Acencio M."/>
            <person name="Alvarenga R."/>
            <person name="Alves L.M.C."/>
            <person name="Araya J.E."/>
            <person name="Baia G.S."/>
            <person name="Baptista C.S."/>
            <person name="Barros M.H."/>
            <person name="Bonaccorsi E.D."/>
            <person name="Bordin S."/>
            <person name="Bove J.M."/>
            <person name="Briones M.R.S."/>
            <person name="Bueno M.R.P."/>
            <person name="Camargo A.A."/>
            <person name="Camargo L.E.A."/>
            <person name="Carraro D.M."/>
            <person name="Carrer H."/>
            <person name="Colauto N.B."/>
            <person name="Colombo C."/>
            <person name="Costa F.F."/>
            <person name="Costa M.C.R."/>
            <person name="Costa-Neto C.M."/>
            <person name="Coutinho L.L."/>
            <person name="Cristofani M."/>
            <person name="Dias-Neto E."/>
            <person name="Docena C."/>
            <person name="El-Dorry H."/>
            <person name="Facincani A.P."/>
            <person name="Ferreira A.J.S."/>
            <person name="Ferreira V.C.A."/>
            <person name="Ferro J.A."/>
            <person name="Fraga J.S."/>
            <person name="Franca S.C."/>
            <person name="Franco M.C."/>
            <person name="Frohme M."/>
            <person name="Furlan L.R."/>
            <person name="Garnier M."/>
            <person name="Goldman G.H."/>
            <person name="Goldman M.H.S."/>
            <person name="Gomes S.L."/>
            <person name="Gruber A."/>
            <person name="Ho P.L."/>
            <person name="Hoheisel J.D."/>
            <person name="Junqueira M.L."/>
            <person name="Kemper E.L."/>
            <person name="Kitajima J.P."/>
            <person name="Krieger J.E."/>
            <person name="Kuramae E.E."/>
            <person name="Laigret F."/>
            <person name="Lambais M.R."/>
            <person name="Leite L.C.C."/>
            <person name="Lemos E.G.M."/>
            <person name="Lemos M.V.F."/>
            <person name="Lopes S.A."/>
            <person name="Lopes C.R."/>
            <person name="Machado J.A."/>
            <person name="Machado M.A."/>
            <person name="Madeira A.M.B.N."/>
            <person name="Madeira H.M.F."/>
            <person name="Marino C.L."/>
            <person name="Marques M.V."/>
            <person name="Martins E.A.L."/>
            <person name="Martins E.M.F."/>
            <person name="Matsukuma A.Y."/>
            <person name="Menck C.F.M."/>
            <person name="Miracca E.C."/>
            <person name="Miyaki C.Y."/>
            <person name="Monteiro-Vitorello C.B."/>
            <person name="Moon D.H."/>
            <person name="Nagai M.A."/>
            <person name="Nascimento A.L.T.O."/>
            <person name="Netto L.E.S."/>
            <person name="Nhani A. Jr."/>
            <person name="Nobrega F.G."/>
            <person name="Nunes L.R."/>
            <person name="Oliveira M.A."/>
            <person name="de Oliveira M.C."/>
            <person name="de Oliveira R.C."/>
            <person name="Palmieri D.A."/>
            <person name="Paris A."/>
            <person name="Peixoto B.R."/>
            <person name="Pereira G.A.G."/>
            <person name="Pereira H.A. Jr."/>
            <person name="Pesquero J.B."/>
            <person name="Quaggio R.B."/>
            <person name="Roberto P.G."/>
            <person name="Rodrigues V."/>
            <person name="de Rosa A.J.M."/>
            <person name="de Rosa V.E. Jr."/>
            <person name="de Sa R.G."/>
            <person name="Santelli R.V."/>
            <person name="Sawasaki H.E."/>
            <person name="da Silva A.C.R."/>
            <person name="da Silva A.M."/>
            <person name="da Silva F.R."/>
            <person name="Silva W.A. Jr."/>
            <person name="da Silveira J.F."/>
            <person name="Silvestri M.L.Z."/>
            <person name="Siqueira W.J."/>
            <person name="de Souza A.A."/>
            <person name="de Souza A.P."/>
            <person name="Terenzi M.F."/>
            <person name="Truffi D."/>
            <person name="Tsai S.M."/>
            <person name="Tsuhako M.H."/>
            <person name="Vallada H."/>
            <person name="Van Sluys M.A."/>
            <person name="Verjovski-Almeida S."/>
            <person name="Vettore A.L."/>
            <person name="Zago M.A."/>
            <person name="Zatz M."/>
            <person name="Meidanis J."/>
            <person name="Setubal J.C."/>
        </authorList>
    </citation>
    <scope>NUCLEOTIDE SEQUENCE [LARGE SCALE GENOMIC DNA]</scope>
    <source>
        <strain>9a5c</strain>
    </source>
</reference>
<protein>
    <recommendedName>
        <fullName evidence="1">Large ribosomal subunit protein uL22</fullName>
    </recommendedName>
    <alternativeName>
        <fullName evidence="2">50S ribosomal protein L22</fullName>
    </alternativeName>
</protein>
<proteinExistence type="inferred from homology"/>
<evidence type="ECO:0000255" key="1">
    <source>
        <dbReference type="HAMAP-Rule" id="MF_01331"/>
    </source>
</evidence>
<evidence type="ECO:0000305" key="2"/>
<keyword id="KW-0687">Ribonucleoprotein</keyword>
<keyword id="KW-0689">Ribosomal protein</keyword>
<keyword id="KW-0694">RNA-binding</keyword>
<keyword id="KW-0699">rRNA-binding</keyword>
<sequence length="111" mass="11934">MEATAILRGARISPQKARLVAAQVRGLSAESAVNILRFSSKKAACLIKKVVESAIANAENNHGSNIDALKINTIIVDEGRMLKRFMARAKGRSSRIVKRSSHITVVVGPAK</sequence>
<feature type="chain" id="PRO_0000125267" description="Large ribosomal subunit protein uL22">
    <location>
        <begin position="1"/>
        <end position="111"/>
    </location>
</feature>
<dbReference type="EMBL" id="AE003849">
    <property type="protein sequence ID" value="AAF83967.1"/>
    <property type="molecule type" value="Genomic_DNA"/>
</dbReference>
<dbReference type="PIR" id="E82717">
    <property type="entry name" value="E82717"/>
</dbReference>
<dbReference type="RefSeq" id="WP_010893673.1">
    <property type="nucleotide sequence ID" value="NC_002488.3"/>
</dbReference>
<dbReference type="SMR" id="Q9PE71"/>
<dbReference type="STRING" id="160492.XF_1157"/>
<dbReference type="KEGG" id="xfa:XF_1157"/>
<dbReference type="eggNOG" id="COG0091">
    <property type="taxonomic scope" value="Bacteria"/>
</dbReference>
<dbReference type="HOGENOM" id="CLU_083987_3_3_6"/>
<dbReference type="Proteomes" id="UP000000812">
    <property type="component" value="Chromosome"/>
</dbReference>
<dbReference type="GO" id="GO:0022625">
    <property type="term" value="C:cytosolic large ribosomal subunit"/>
    <property type="evidence" value="ECO:0007669"/>
    <property type="project" value="TreeGrafter"/>
</dbReference>
<dbReference type="GO" id="GO:0019843">
    <property type="term" value="F:rRNA binding"/>
    <property type="evidence" value="ECO:0007669"/>
    <property type="project" value="UniProtKB-UniRule"/>
</dbReference>
<dbReference type="GO" id="GO:0003735">
    <property type="term" value="F:structural constituent of ribosome"/>
    <property type="evidence" value="ECO:0007669"/>
    <property type="project" value="InterPro"/>
</dbReference>
<dbReference type="GO" id="GO:0006412">
    <property type="term" value="P:translation"/>
    <property type="evidence" value="ECO:0007669"/>
    <property type="project" value="UniProtKB-UniRule"/>
</dbReference>
<dbReference type="CDD" id="cd00336">
    <property type="entry name" value="Ribosomal_L22"/>
    <property type="match status" value="1"/>
</dbReference>
<dbReference type="FunFam" id="3.90.470.10:FF:000001">
    <property type="entry name" value="50S ribosomal protein L22"/>
    <property type="match status" value="1"/>
</dbReference>
<dbReference type="Gene3D" id="3.90.470.10">
    <property type="entry name" value="Ribosomal protein L22/L17"/>
    <property type="match status" value="1"/>
</dbReference>
<dbReference type="HAMAP" id="MF_01331_B">
    <property type="entry name" value="Ribosomal_uL22_B"/>
    <property type="match status" value="1"/>
</dbReference>
<dbReference type="InterPro" id="IPR001063">
    <property type="entry name" value="Ribosomal_uL22"/>
</dbReference>
<dbReference type="InterPro" id="IPR005727">
    <property type="entry name" value="Ribosomal_uL22_bac/chlpt-type"/>
</dbReference>
<dbReference type="InterPro" id="IPR047867">
    <property type="entry name" value="Ribosomal_uL22_bac/org-type"/>
</dbReference>
<dbReference type="InterPro" id="IPR018260">
    <property type="entry name" value="Ribosomal_uL22_CS"/>
</dbReference>
<dbReference type="InterPro" id="IPR036394">
    <property type="entry name" value="Ribosomal_uL22_sf"/>
</dbReference>
<dbReference type="NCBIfam" id="TIGR01044">
    <property type="entry name" value="rplV_bact"/>
    <property type="match status" value="1"/>
</dbReference>
<dbReference type="PANTHER" id="PTHR13501">
    <property type="entry name" value="CHLOROPLAST 50S RIBOSOMAL PROTEIN L22-RELATED"/>
    <property type="match status" value="1"/>
</dbReference>
<dbReference type="PANTHER" id="PTHR13501:SF8">
    <property type="entry name" value="LARGE RIBOSOMAL SUBUNIT PROTEIN UL22M"/>
    <property type="match status" value="1"/>
</dbReference>
<dbReference type="Pfam" id="PF00237">
    <property type="entry name" value="Ribosomal_L22"/>
    <property type="match status" value="1"/>
</dbReference>
<dbReference type="SUPFAM" id="SSF54843">
    <property type="entry name" value="Ribosomal protein L22"/>
    <property type="match status" value="1"/>
</dbReference>
<dbReference type="PROSITE" id="PS00464">
    <property type="entry name" value="RIBOSOMAL_L22"/>
    <property type="match status" value="1"/>
</dbReference>
<comment type="function">
    <text evidence="1">This protein binds specifically to 23S rRNA; its binding is stimulated by other ribosomal proteins, e.g. L4, L17, and L20. It is important during the early stages of 50S assembly. It makes multiple contacts with different domains of the 23S rRNA in the assembled 50S subunit and ribosome (By similarity).</text>
</comment>
<comment type="function">
    <text evidence="1">The globular domain of the protein is located near the polypeptide exit tunnel on the outside of the subunit, while an extended beta-hairpin is found that lines the wall of the exit tunnel in the center of the 70S ribosome.</text>
</comment>
<comment type="subunit">
    <text evidence="1">Part of the 50S ribosomal subunit.</text>
</comment>
<comment type="similarity">
    <text evidence="1">Belongs to the universal ribosomal protein uL22 family.</text>
</comment>
<gene>
    <name evidence="1" type="primary">rplV</name>
    <name type="ordered locus">XF_1157</name>
</gene>
<name>RL22_XYLFA</name>